<gene>
    <name type="primary">RPS6KA1</name>
    <name type="synonym">MAPKAPK1A</name>
    <name type="synonym">RSK1</name>
</gene>
<comment type="function">
    <text evidence="4 5 6 8 9 10 11 12 14 16 17 18 20 22 24 25">Serine/threonine-protein kinase that acts downstream of ERK (MAPK1/ERK2 and MAPK3/ERK1) signaling and mediates mitogenic and stress-induced activation of the transcription factors CREB1, ETV1/ER81 and NR4A1/NUR77, regulates translation through RPS6 and EIF4B phosphorylation, and mediates cellular proliferation, survival, and differentiation by modulating mTOR signaling and repressing pro-apoptotic function of BAD and DAPK1 (PubMed:10679322, PubMed:12213813, PubMed:15117958, PubMed:16223362, PubMed:17360704, PubMed:18722121, PubMed:26158630, PubMed:35772404, PubMed:9430688). In fibroblast, is required for EGF-stimulated phosphorylation of CREB1, which results in the subsequent transcriptional activation of several immediate-early genes (PubMed:18508509, PubMed:18813292). In response to mitogenic stimulation (EGF and PMA), phosphorylates and activates NR4A1/NUR77 and ETV1/ER81 transcription factors and the cofactor CREBBP (PubMed:12213813, PubMed:16223362). Upon insulin-derived signal, acts indirectly on the transcription regulation of several genes by phosphorylating GSK3B at 'Ser-9' and inhibiting its activity (PubMed:18508509, PubMed:18813292). Phosphorylates RPS6 in response to serum or EGF via an mTOR-independent mechanism and promotes translation initiation by facilitating assembly of the pre-initiation complex (PubMed:17360704). In response to insulin, phosphorylates EIF4B, enhancing EIF4B affinity for the EIF3 complex and stimulating cap-dependent translation (PubMed:16763566). Is involved in the mTOR nutrient-sensing pathway by directly phosphorylating TSC2 at 'Ser-1798', which potently inhibits TSC2 ability to suppress mTOR signaling, and mediates phosphorylation of RPTOR, which regulates mTORC1 activity and may promote rapamycin-sensitive signaling independently of the PI3K/AKT pathway (PubMed:15342917). Also involved in feedback regulation of mTORC1 and mTORC2 by phosphorylating DEPTOR (PubMed:22017876). Mediates cell survival by phosphorylating the pro-apoptotic proteins BAD and DAPK1 and suppressing their pro-apoptotic function (PubMed:10679322, PubMed:16213824). Promotes the survival of hepatic stellate cells by phosphorylating CEBPB in response to the hepatotoxin carbon tetrachloride (CCl4) (PubMed:11684016). Mediates induction of hepatocyte prolifration by TGFA through phosphorylation of CEBPB (PubMed:18508509, PubMed:18813292). Is involved in cell cycle regulation by phosphorylating the CDK inhibitor CDKN1B, which promotes CDKN1B association with 14-3-3 proteins and prevents its translocation to the nucleus and inhibition of G1 progression (PubMed:18508509, PubMed:18813292). Phosphorylates EPHA2 at 'Ser-897', the RPS6KA-EPHA2 signaling pathway controls cell migration (PubMed:26158630). In response to mTORC1 activation, phosphorylates EIF4B at 'Ser-406' and 'Ser-422' which stimulates bicarbonate cotransporter SLC4A7 mRNA translation, increasing SLC4A7 protein abundance and function (PubMed:35772404).</text>
</comment>
<comment type="function">
    <text evidence="19">(Microbial infection) Promotes the late transcription and translation of viral lytic genes during Kaposi's sarcoma-associated herpesvirus/HHV-8 infection, when constitutively activated.</text>
</comment>
<comment type="catalytic activity">
    <reaction>
        <text>L-seryl-[protein] + ATP = O-phospho-L-seryl-[protein] + ADP + H(+)</text>
        <dbReference type="Rhea" id="RHEA:17989"/>
        <dbReference type="Rhea" id="RHEA-COMP:9863"/>
        <dbReference type="Rhea" id="RHEA-COMP:11604"/>
        <dbReference type="ChEBI" id="CHEBI:15378"/>
        <dbReference type="ChEBI" id="CHEBI:29999"/>
        <dbReference type="ChEBI" id="CHEBI:30616"/>
        <dbReference type="ChEBI" id="CHEBI:83421"/>
        <dbReference type="ChEBI" id="CHEBI:456216"/>
        <dbReference type="EC" id="2.7.11.1"/>
    </reaction>
</comment>
<comment type="catalytic activity">
    <reaction>
        <text>L-threonyl-[protein] + ATP = O-phospho-L-threonyl-[protein] + ADP + H(+)</text>
        <dbReference type="Rhea" id="RHEA:46608"/>
        <dbReference type="Rhea" id="RHEA-COMP:11060"/>
        <dbReference type="Rhea" id="RHEA-COMP:11605"/>
        <dbReference type="ChEBI" id="CHEBI:15378"/>
        <dbReference type="ChEBI" id="CHEBI:30013"/>
        <dbReference type="ChEBI" id="CHEBI:30616"/>
        <dbReference type="ChEBI" id="CHEBI:61977"/>
        <dbReference type="ChEBI" id="CHEBI:456216"/>
        <dbReference type="EC" id="2.7.11.1"/>
    </reaction>
</comment>
<comment type="cofactor">
    <cofactor>
        <name>Mg(2+)</name>
        <dbReference type="ChEBI" id="CHEBI:18420"/>
    </cofactor>
</comment>
<comment type="activity regulation">
    <text evidence="8 22">Upon extracellular signal or mitogen stimulation, phosphorylated at Thr-573 in the C-terminal kinase domain (CTKD) by MAPK1/ERK2 and MAPK3/ERK1. The activated CTKD then autophosphorylates Ser-380, allowing binding of PDPK1, which in turn phosphorylates Ser-221 in the N-terminal kinase domain (NTDK) leading to the full activation of the protein and subsequent phosphorylation of the substrates by the NTKD.</text>
</comment>
<comment type="subunit">
    <text evidence="6 7 8 9 15">Forms a complex with either MAPK1/ERK2 or MAPK3/ERK1 in quiescent cells. Transiently dissociates following mitogenic stimulation. Interacts with ETV1/ER81 and FGFR1.</text>
</comment>
<comment type="subunit">
    <text evidence="19">(Microbial infection) Interacts with Kaposi's sarcoma-associated herpesvirus/HHV-8 protein ORF45; this interaction allows RPS6KA1 activation.</text>
</comment>
<comment type="interaction">
    <interactant intactId="EBI-963034">
        <id>Q15418</id>
    </interactant>
    <interactant intactId="EBI-1237481">
        <id>O43823</id>
        <label>AKAP8</label>
    </interactant>
    <organismsDiffer>false</organismsDiffer>
    <experiments>5</experiments>
</comment>
<comment type="interaction">
    <interactant intactId="EBI-963034">
        <id>Q15418</id>
    </interactant>
    <interactant intactId="EBI-295634">
        <id>Q16543</id>
        <label>CDC37</label>
    </interactant>
    <organismsDiffer>false</organismsDiffer>
    <experiments>7</experiments>
</comment>
<comment type="interaction">
    <interactant intactId="EBI-963034">
        <id>Q15418</id>
    </interactant>
    <interactant intactId="EBI-519280">
        <id>P46527</id>
        <label>CDKN1B</label>
    </interactant>
    <organismsDiffer>false</organismsDiffer>
    <experiments>2</experiments>
</comment>
<comment type="interaction">
    <interactant intactId="EBI-963034">
        <id>Q15418</id>
    </interactant>
    <interactant intactId="EBI-352572">
        <id>P08238</id>
        <label>HSP90AB1</label>
    </interactant>
    <organismsDiffer>false</organismsDiffer>
    <experiments>4</experiments>
</comment>
<comment type="interaction">
    <interactant intactId="EBI-963034">
        <id>Q15418</id>
    </interactant>
    <interactant intactId="EBI-959949">
        <id>P28482</id>
        <label>MAPK1</label>
    </interactant>
    <organismsDiffer>false</organismsDiffer>
    <experiments>12</experiments>
</comment>
<comment type="interaction">
    <interactant intactId="EBI-963034">
        <id>Q15418</id>
    </interactant>
    <interactant intactId="EBI-458391">
        <id>P04271</id>
        <label>S100B</label>
    </interactant>
    <organismsDiffer>false</organismsDiffer>
    <experiments>2</experiments>
</comment>
<comment type="interaction">
    <interactant intactId="EBI-963034">
        <id>Q15418</id>
    </interactant>
    <interactant intactId="EBI-357345">
        <id>Q14160</id>
        <label>SCRIB</label>
    </interactant>
    <organismsDiffer>false</organismsDiffer>
    <experiments>3</experiments>
</comment>
<comment type="interaction">
    <interactant intactId="EBI-963034">
        <id>Q15418</id>
    </interactant>
    <interactant intactId="EBI-748201">
        <id>P50552</id>
        <label>VASP</label>
    </interactant>
    <organismsDiffer>false</organismsDiffer>
    <experiments>4</experiments>
</comment>
<comment type="interaction">
    <interactant intactId="EBI-963034">
        <id>Q15418</id>
    </interactant>
    <interactant intactId="EBI-26365850">
        <id>A1JU68</id>
        <label>yopM</label>
    </interactant>
    <organismsDiffer>true</organismsDiffer>
    <experiments>3</experiments>
</comment>
<comment type="subcellular location">
    <subcellularLocation>
        <location>Nucleus</location>
    </subcellularLocation>
    <subcellularLocation>
        <location>Cytoplasm</location>
    </subcellularLocation>
</comment>
<comment type="alternative products">
    <event type="alternative splicing"/>
    <isoform>
        <id>Q15418-1</id>
        <name>1</name>
        <sequence type="displayed"/>
    </isoform>
    <isoform>
        <id>Q15418-2</id>
        <name>2</name>
        <sequence type="described" ref="VSP_041380"/>
    </isoform>
    <isoform>
        <id>Q15418-3</id>
        <name>3</name>
        <sequence type="described" ref="VSP_041580"/>
    </isoform>
    <isoform>
        <id>Q15418-4</id>
        <name evidence="26">4</name>
        <sequence type="described" ref="VSP_057469"/>
    </isoform>
</comment>
<comment type="PTM">
    <text evidence="22">Activated by phosphorylation at Ser-221 by PDPK1. Autophosphorylated on Ser-380, as part of the activation process. May be phosphorylated at Thr-359 and Ser-363 by MAPK1/ERK2 and MAPK3/ERK1.</text>
</comment>
<comment type="PTM">
    <text>N-terminal myristoylation results in an activated kinase in the absence of added growth factors.</text>
</comment>
<comment type="similarity">
    <text evidence="26">Belongs to the protein kinase superfamily. AGC Ser/Thr protein kinase family. S6 kinase subfamily.</text>
</comment>
<comment type="online information" name="Atlas of Genetics and Cytogenetics in Oncology and Haematology">
    <link uri="https://atlasgeneticsoncology.org/gene/43477/RPS6KA1"/>
</comment>
<accession>Q15418</accession>
<accession>A6NGG4</accession>
<accession>A8K9K7</accession>
<accession>B2RDY8</accession>
<accession>B7Z5J0</accession>
<accession>E9PRI4</accession>
<accession>Q5SVM5</accession>
<accession>Q5SVM8</accession>
<accession>Q5SVM9</accession>
<accession>Q96C05</accession>
<accession>Q9BQK2</accession>
<sequence length="735" mass="82723">MPLAQLKEPWPLMELVPLDPENGQTSGEEAGLQPSKDEGVLKEISITHHVKAGSEKADPSHFELLKVLGQGSFGKVFLVRKVTRPDSGHLYAMKVLKKATLKVRDRVRTKMERDILADVNHPFVVKLHYAFQTEGKLYLILDFLRGGDLFTRLSKEVMFTEEDVKFYLAELALGLDHLHSLGIIYRDLKPENILLDEEGHIKLTDFGLSKEAIDHEKKAYSFCGTVEYMAPEVVNRQGHSHSADWWSYGVLMFEMLTGSLPFQGKDRKETMTLILKAKLGMPQFLSTEAQSLLRALFKRNPANRLGSGPDGAEEIKRHVFYSTIDWNKLYRREIKPPFKPAVAQPDDTFYFDTEFTSRTPKDSPGIPPSAGAHQLFRGFSFVATGLMEDDGKPRAPQAPLHSVVQQLHGKNLVFSDGYVVKETIGVGSYSECKRCVHKATNMEYAVKVIDKSKRDPSEEIEILLRYGQHPNIITLKDVYDDGKHVYLVTELMRGGELLDKILRQKFFSEREASFVLHTIGKTVEYLHSQGVVHRDLKPSNILYVDESGNPECLRICDFGFAKQLRAENGLLMTPCYTANFVAPEVLKRQGYDEGCDIWSLGILLYTMLAGYTPFANGPSDTPEEILTRIGSGKFTLSGGNWNTVSETAKDLVSKMLHVDPHQRLTAKQVLQHPWVTQKDKLPQSQLSHQDLQLVKGAMAATYSALNSSKPTPQLKPIESSILAQRRVRKLPSTTL</sequence>
<feature type="chain" id="PRO_0000086198" description="Ribosomal protein S6 kinase alpha-1">
    <location>
        <begin position="1"/>
        <end position="735"/>
    </location>
</feature>
<feature type="domain" description="Protein kinase 1" evidence="2">
    <location>
        <begin position="62"/>
        <end position="321"/>
    </location>
</feature>
<feature type="domain" description="AGC-kinase C-terminal" evidence="3">
    <location>
        <begin position="322"/>
        <end position="391"/>
    </location>
</feature>
<feature type="domain" description="Protein kinase 2" evidence="2">
    <location>
        <begin position="418"/>
        <end position="675"/>
    </location>
</feature>
<feature type="active site" description="Proton acceptor" evidence="1">
    <location>
        <position position="187"/>
    </location>
</feature>
<feature type="active site" description="Proton acceptor" evidence="1">
    <location>
        <position position="535"/>
    </location>
</feature>
<feature type="binding site" evidence="2">
    <location>
        <begin position="68"/>
        <end position="76"/>
    </location>
    <ligand>
        <name>ATP</name>
        <dbReference type="ChEBI" id="CHEBI:30616"/>
    </ligand>
</feature>
<feature type="binding site" evidence="2">
    <location>
        <position position="94"/>
    </location>
    <ligand>
        <name>ATP</name>
        <dbReference type="ChEBI" id="CHEBI:30616"/>
    </ligand>
</feature>
<feature type="binding site" evidence="2">
    <location>
        <begin position="424"/>
        <end position="432"/>
    </location>
    <ligand>
        <name>ATP</name>
        <dbReference type="ChEBI" id="CHEBI:30616"/>
    </ligand>
</feature>
<feature type="binding site" evidence="2">
    <location>
        <position position="447"/>
    </location>
    <ligand>
        <name>ATP</name>
        <dbReference type="ChEBI" id="CHEBI:30616"/>
    </ligand>
</feature>
<feature type="modified residue" description="Phosphoserine" evidence="30">
    <location>
        <position position="54"/>
    </location>
</feature>
<feature type="modified residue" description="Phosphoserine; by PDPK1" evidence="27">
    <location>
        <position position="221"/>
    </location>
</feature>
<feature type="modified residue" description="Phosphoserine" evidence="30">
    <location>
        <position position="307"/>
    </location>
</feature>
<feature type="modified residue" description="Phosphothreonine" evidence="22 28 29 30 32 33">
    <location>
        <position position="359"/>
    </location>
</feature>
<feature type="modified residue" description="Phosphoserine" evidence="22 28 29 30 32 33 34">
    <location>
        <position position="363"/>
    </location>
</feature>
<feature type="modified residue" description="Phosphoserine" evidence="28 30 33">
    <location>
        <position position="369"/>
    </location>
</feature>
<feature type="modified residue" description="Phosphoserine; by autocatalysis" evidence="22 28 29 30 31 33 34">
    <location>
        <position position="380"/>
    </location>
</feature>
<feature type="modified residue" description="Phosphothreonine" evidence="22">
    <location>
        <position position="573"/>
    </location>
</feature>
<feature type="modified residue" description="Phosphoserine" evidence="22">
    <location>
        <position position="732"/>
    </location>
</feature>
<feature type="splice variant" id="VSP_041580" description="In isoform 3." evidence="23">
    <location>
        <begin position="1"/>
        <end position="92"/>
    </location>
</feature>
<feature type="splice variant" id="VSP_041380" description="In isoform 2." evidence="23">
    <original>MPLAQLKEPWPLMELVPLDPENGQTSGEEAGLQPSK</original>
    <variation>MEQDPKPPRLRLWALIPWLPRKQRPRISQTSLPVPGPGSGPQRDS</variation>
    <location>
        <begin position="1"/>
        <end position="36"/>
    </location>
</feature>
<feature type="splice variant" id="VSP_057469" description="In isoform 4.">
    <original>MPLAQLKEPWPLMELVPLDPENGQTSGEEAGLQPS</original>
    <variation>MQTPADFPRVERDLVPCPR</variation>
    <location>
        <begin position="1"/>
        <end position="35"/>
    </location>
</feature>
<feature type="sequence variant" id="VAR_021864" description="In dbSNP:rs2229712." evidence="13 21">
    <original>K</original>
    <variation>T</variation>
    <location>
        <position position="335"/>
    </location>
</feature>
<feature type="sequence conflict" description="In Ref. 2; BAF85411." evidence="26" ref="2">
    <original>A</original>
    <variation>T</variation>
    <location>
        <position position="609"/>
    </location>
</feature>
<feature type="sequence conflict" description="In Ref. 2; BAF85411." evidence="26" ref="2">
    <original>S</original>
    <variation>G</variation>
    <location>
        <position position="619"/>
    </location>
</feature>
<feature type="helix" evidence="36">
    <location>
        <begin position="59"/>
        <end position="61"/>
    </location>
</feature>
<feature type="strand" evidence="36">
    <location>
        <begin position="62"/>
        <end position="71"/>
    </location>
</feature>
<feature type="strand" evidence="36">
    <location>
        <begin position="74"/>
        <end position="81"/>
    </location>
</feature>
<feature type="strand" evidence="36">
    <location>
        <begin position="83"/>
        <end position="86"/>
    </location>
</feature>
<feature type="strand" evidence="36">
    <location>
        <begin position="90"/>
        <end position="96"/>
    </location>
</feature>
<feature type="strand" evidence="36">
    <location>
        <begin position="127"/>
        <end position="133"/>
    </location>
</feature>
<feature type="strand" evidence="36">
    <location>
        <begin position="136"/>
        <end position="141"/>
    </location>
</feature>
<feature type="strand" evidence="41">
    <location>
        <begin position="146"/>
        <end position="148"/>
    </location>
</feature>
<feature type="helix" evidence="36">
    <location>
        <begin position="149"/>
        <end position="156"/>
    </location>
</feature>
<feature type="helix" evidence="36">
    <location>
        <begin position="161"/>
        <end position="180"/>
    </location>
</feature>
<feature type="helix" evidence="36">
    <location>
        <begin position="190"/>
        <end position="192"/>
    </location>
</feature>
<feature type="strand" evidence="36">
    <location>
        <begin position="193"/>
        <end position="195"/>
    </location>
</feature>
<feature type="strand" evidence="36">
    <location>
        <begin position="197"/>
        <end position="199"/>
    </location>
</feature>
<feature type="strand" evidence="36">
    <location>
        <begin position="201"/>
        <end position="203"/>
    </location>
</feature>
<feature type="helix" evidence="36">
    <location>
        <begin position="226"/>
        <end position="228"/>
    </location>
</feature>
<feature type="helix" evidence="36">
    <location>
        <begin position="231"/>
        <end position="234"/>
    </location>
</feature>
<feature type="helix" evidence="36">
    <location>
        <begin position="241"/>
        <end position="257"/>
    </location>
</feature>
<feature type="helix" evidence="36">
    <location>
        <begin position="267"/>
        <end position="276"/>
    </location>
</feature>
<feature type="helix" evidence="36">
    <location>
        <begin position="287"/>
        <end position="296"/>
    </location>
</feature>
<feature type="turn" evidence="36">
    <location>
        <begin position="301"/>
        <end position="303"/>
    </location>
</feature>
<feature type="strand" evidence="36">
    <location>
        <begin position="307"/>
        <end position="310"/>
    </location>
</feature>
<feature type="helix" evidence="36">
    <location>
        <begin position="312"/>
        <end position="316"/>
    </location>
</feature>
<feature type="helix" evidence="36">
    <location>
        <begin position="319"/>
        <end position="321"/>
    </location>
</feature>
<feature type="helix" evidence="36">
    <location>
        <begin position="326"/>
        <end position="330"/>
    </location>
</feature>
<feature type="strand" evidence="37">
    <location>
        <begin position="418"/>
        <end position="427"/>
    </location>
</feature>
<feature type="strand" evidence="37">
    <location>
        <begin position="430"/>
        <end position="437"/>
    </location>
</feature>
<feature type="turn" evidence="37">
    <location>
        <begin position="438"/>
        <end position="441"/>
    </location>
</feature>
<feature type="strand" evidence="37">
    <location>
        <begin position="442"/>
        <end position="450"/>
    </location>
</feature>
<feature type="turn" evidence="37">
    <location>
        <begin position="451"/>
        <end position="453"/>
    </location>
</feature>
<feature type="helix" evidence="37">
    <location>
        <begin position="457"/>
        <end position="466"/>
    </location>
</feature>
<feature type="strand" evidence="37">
    <location>
        <begin position="475"/>
        <end position="480"/>
    </location>
</feature>
<feature type="strand" evidence="37">
    <location>
        <begin position="482"/>
        <end position="490"/>
    </location>
</feature>
<feature type="helix" evidence="37">
    <location>
        <begin position="497"/>
        <end position="501"/>
    </location>
</feature>
<feature type="strand" evidence="40">
    <location>
        <begin position="503"/>
        <end position="505"/>
    </location>
</feature>
<feature type="helix" evidence="37">
    <location>
        <begin position="509"/>
        <end position="528"/>
    </location>
</feature>
<feature type="helix" evidence="37">
    <location>
        <begin position="538"/>
        <end position="540"/>
    </location>
</feature>
<feature type="strand" evidence="37">
    <location>
        <begin position="541"/>
        <end position="547"/>
    </location>
</feature>
<feature type="helix" evidence="37">
    <location>
        <begin position="550"/>
        <end position="552"/>
    </location>
</feature>
<feature type="strand" evidence="37">
    <location>
        <begin position="553"/>
        <end position="555"/>
    </location>
</feature>
<feature type="strand" evidence="40">
    <location>
        <begin position="567"/>
        <end position="569"/>
    </location>
</feature>
<feature type="turn" evidence="35">
    <location>
        <begin position="574"/>
        <end position="576"/>
    </location>
</feature>
<feature type="helix" evidence="37">
    <location>
        <begin position="583"/>
        <end position="609"/>
    </location>
</feature>
<feature type="helix" evidence="37">
    <location>
        <begin position="622"/>
        <end position="631"/>
    </location>
</feature>
<feature type="helix" evidence="37">
    <location>
        <begin position="639"/>
        <end position="642"/>
    </location>
</feature>
<feature type="helix" evidence="37">
    <location>
        <begin position="646"/>
        <end position="655"/>
    </location>
</feature>
<feature type="helix" evidence="37">
    <location>
        <begin position="660"/>
        <end position="662"/>
    </location>
</feature>
<feature type="helix" evidence="37">
    <location>
        <begin position="666"/>
        <end position="671"/>
    </location>
</feature>
<feature type="helix" evidence="37">
    <location>
        <begin position="673"/>
        <end position="676"/>
    </location>
</feature>
<feature type="helix" evidence="37">
    <location>
        <begin position="678"/>
        <end position="680"/>
    </location>
</feature>
<feature type="helix" evidence="37">
    <location>
        <begin position="691"/>
        <end position="706"/>
    </location>
</feature>
<feature type="helix" evidence="38">
    <location>
        <begin position="717"/>
        <end position="719"/>
    </location>
</feature>
<feature type="helix" evidence="38">
    <location>
        <begin position="721"/>
        <end position="725"/>
    </location>
</feature>
<feature type="strand" evidence="39">
    <location>
        <begin position="733"/>
        <end position="735"/>
    </location>
</feature>
<name>KS6A1_HUMAN</name>
<keyword id="KW-0002">3D-structure</keyword>
<keyword id="KW-0025">Alternative splicing</keyword>
<keyword id="KW-0067">ATP-binding</keyword>
<keyword id="KW-0131">Cell cycle</keyword>
<keyword id="KW-0963">Cytoplasm</keyword>
<keyword id="KW-0945">Host-virus interaction</keyword>
<keyword id="KW-0418">Kinase</keyword>
<keyword id="KW-0460">Magnesium</keyword>
<keyword id="KW-0479">Metal-binding</keyword>
<keyword id="KW-0547">Nucleotide-binding</keyword>
<keyword id="KW-0539">Nucleus</keyword>
<keyword id="KW-0597">Phosphoprotein</keyword>
<keyword id="KW-1267">Proteomics identification</keyword>
<keyword id="KW-1185">Reference proteome</keyword>
<keyword id="KW-0677">Repeat</keyword>
<keyword id="KW-0723">Serine/threonine-protein kinase</keyword>
<keyword id="KW-0346">Stress response</keyword>
<keyword id="KW-0808">Transferase</keyword>
<reference key="1">
    <citation type="journal article" date="1994" name="Am. J. Physiol.">
        <title>Human rsk isoforms: cloning and characterization of tissue-specific expression.</title>
        <authorList>
            <person name="Moller D.E."/>
            <person name="Xia C.-H."/>
            <person name="Tang W."/>
            <person name="Zhu A.X."/>
            <person name="Jakubowski M."/>
        </authorList>
    </citation>
    <scope>NUCLEOTIDE SEQUENCE [MRNA] (ISOFORM 1)</scope>
    <scope>VARIANT THR-335</scope>
</reference>
<reference key="2">
    <citation type="journal article" date="2004" name="Nat. Genet.">
        <title>Complete sequencing and characterization of 21,243 full-length human cDNAs.</title>
        <authorList>
            <person name="Ota T."/>
            <person name="Suzuki Y."/>
            <person name="Nishikawa T."/>
            <person name="Otsuki T."/>
            <person name="Sugiyama T."/>
            <person name="Irie R."/>
            <person name="Wakamatsu A."/>
            <person name="Hayashi K."/>
            <person name="Sato H."/>
            <person name="Nagai K."/>
            <person name="Kimura K."/>
            <person name="Makita H."/>
            <person name="Sekine M."/>
            <person name="Obayashi M."/>
            <person name="Nishi T."/>
            <person name="Shibahara T."/>
            <person name="Tanaka T."/>
            <person name="Ishii S."/>
            <person name="Yamamoto J."/>
            <person name="Saito K."/>
            <person name="Kawai Y."/>
            <person name="Isono Y."/>
            <person name="Nakamura Y."/>
            <person name="Nagahari K."/>
            <person name="Murakami K."/>
            <person name="Yasuda T."/>
            <person name="Iwayanagi T."/>
            <person name="Wagatsuma M."/>
            <person name="Shiratori A."/>
            <person name="Sudo H."/>
            <person name="Hosoiri T."/>
            <person name="Kaku Y."/>
            <person name="Kodaira H."/>
            <person name="Kondo H."/>
            <person name="Sugawara M."/>
            <person name="Takahashi M."/>
            <person name="Kanda K."/>
            <person name="Yokoi T."/>
            <person name="Furuya T."/>
            <person name="Kikkawa E."/>
            <person name="Omura Y."/>
            <person name="Abe K."/>
            <person name="Kamihara K."/>
            <person name="Katsuta N."/>
            <person name="Sato K."/>
            <person name="Tanikawa M."/>
            <person name="Yamazaki M."/>
            <person name="Ninomiya K."/>
            <person name="Ishibashi T."/>
            <person name="Yamashita H."/>
            <person name="Murakawa K."/>
            <person name="Fujimori K."/>
            <person name="Tanai H."/>
            <person name="Kimata M."/>
            <person name="Watanabe M."/>
            <person name="Hiraoka S."/>
            <person name="Chiba Y."/>
            <person name="Ishida S."/>
            <person name="Ono Y."/>
            <person name="Takiguchi S."/>
            <person name="Watanabe S."/>
            <person name="Yosida M."/>
            <person name="Hotuta T."/>
            <person name="Kusano J."/>
            <person name="Kanehori K."/>
            <person name="Takahashi-Fujii A."/>
            <person name="Hara H."/>
            <person name="Tanase T.-O."/>
            <person name="Nomura Y."/>
            <person name="Togiya S."/>
            <person name="Komai F."/>
            <person name="Hara R."/>
            <person name="Takeuchi K."/>
            <person name="Arita M."/>
            <person name="Imose N."/>
            <person name="Musashino K."/>
            <person name="Yuuki H."/>
            <person name="Oshima A."/>
            <person name="Sasaki N."/>
            <person name="Aotsuka S."/>
            <person name="Yoshikawa Y."/>
            <person name="Matsunawa H."/>
            <person name="Ichihara T."/>
            <person name="Shiohata N."/>
            <person name="Sano S."/>
            <person name="Moriya S."/>
            <person name="Momiyama H."/>
            <person name="Satoh N."/>
            <person name="Takami S."/>
            <person name="Terashima Y."/>
            <person name="Suzuki O."/>
            <person name="Nakagawa S."/>
            <person name="Senoh A."/>
            <person name="Mizoguchi H."/>
            <person name="Goto Y."/>
            <person name="Shimizu F."/>
            <person name="Wakebe H."/>
            <person name="Hishigaki H."/>
            <person name="Watanabe T."/>
            <person name="Sugiyama A."/>
            <person name="Takemoto M."/>
            <person name="Kawakami B."/>
            <person name="Yamazaki M."/>
            <person name="Watanabe K."/>
            <person name="Kumagai A."/>
            <person name="Itakura S."/>
            <person name="Fukuzumi Y."/>
            <person name="Fujimori Y."/>
            <person name="Komiyama M."/>
            <person name="Tashiro H."/>
            <person name="Tanigami A."/>
            <person name="Fujiwara T."/>
            <person name="Ono T."/>
            <person name="Yamada K."/>
            <person name="Fujii Y."/>
            <person name="Ozaki K."/>
            <person name="Hirao M."/>
            <person name="Ohmori Y."/>
            <person name="Kawabata A."/>
            <person name="Hikiji T."/>
            <person name="Kobatake N."/>
            <person name="Inagaki H."/>
            <person name="Ikema Y."/>
            <person name="Okamoto S."/>
            <person name="Okitani R."/>
            <person name="Kawakami T."/>
            <person name="Noguchi S."/>
            <person name="Itoh T."/>
            <person name="Shigeta K."/>
            <person name="Senba T."/>
            <person name="Matsumura K."/>
            <person name="Nakajima Y."/>
            <person name="Mizuno T."/>
            <person name="Morinaga M."/>
            <person name="Sasaki M."/>
            <person name="Togashi T."/>
            <person name="Oyama M."/>
            <person name="Hata H."/>
            <person name="Watanabe M."/>
            <person name="Komatsu T."/>
            <person name="Mizushima-Sugano J."/>
            <person name="Satoh T."/>
            <person name="Shirai Y."/>
            <person name="Takahashi Y."/>
            <person name="Nakagawa K."/>
            <person name="Okumura K."/>
            <person name="Nagase T."/>
            <person name="Nomura N."/>
            <person name="Kikuchi H."/>
            <person name="Masuho Y."/>
            <person name="Yamashita R."/>
            <person name="Nakai K."/>
            <person name="Yada T."/>
            <person name="Nakamura Y."/>
            <person name="Ohara O."/>
            <person name="Isogai T."/>
            <person name="Sugano S."/>
        </authorList>
    </citation>
    <scope>NUCLEOTIDE SEQUENCE [LARGE SCALE MRNA] (ISOFORMS 1; 2 AND 3)</scope>
    <source>
        <tissue>Testis</tissue>
        <tissue>Thyroid</tissue>
    </source>
</reference>
<reference key="3">
    <citation type="journal article" date="2006" name="Nature">
        <title>The DNA sequence and biological annotation of human chromosome 1.</title>
        <authorList>
            <person name="Gregory S.G."/>
            <person name="Barlow K.F."/>
            <person name="McLay K.E."/>
            <person name="Kaul R."/>
            <person name="Swarbreck D."/>
            <person name="Dunham A."/>
            <person name="Scott C.E."/>
            <person name="Howe K.L."/>
            <person name="Woodfine K."/>
            <person name="Spencer C.C.A."/>
            <person name="Jones M.C."/>
            <person name="Gillson C."/>
            <person name="Searle S."/>
            <person name="Zhou Y."/>
            <person name="Kokocinski F."/>
            <person name="McDonald L."/>
            <person name="Evans R."/>
            <person name="Phillips K."/>
            <person name="Atkinson A."/>
            <person name="Cooper R."/>
            <person name="Jones C."/>
            <person name="Hall R.E."/>
            <person name="Andrews T.D."/>
            <person name="Lloyd C."/>
            <person name="Ainscough R."/>
            <person name="Almeida J.P."/>
            <person name="Ambrose K.D."/>
            <person name="Anderson F."/>
            <person name="Andrew R.W."/>
            <person name="Ashwell R.I.S."/>
            <person name="Aubin K."/>
            <person name="Babbage A.K."/>
            <person name="Bagguley C.L."/>
            <person name="Bailey J."/>
            <person name="Beasley H."/>
            <person name="Bethel G."/>
            <person name="Bird C.P."/>
            <person name="Bray-Allen S."/>
            <person name="Brown J.Y."/>
            <person name="Brown A.J."/>
            <person name="Buckley D."/>
            <person name="Burton J."/>
            <person name="Bye J."/>
            <person name="Carder C."/>
            <person name="Chapman J.C."/>
            <person name="Clark S.Y."/>
            <person name="Clarke G."/>
            <person name="Clee C."/>
            <person name="Cobley V."/>
            <person name="Collier R.E."/>
            <person name="Corby N."/>
            <person name="Coville G.J."/>
            <person name="Davies J."/>
            <person name="Deadman R."/>
            <person name="Dunn M."/>
            <person name="Earthrowl M."/>
            <person name="Ellington A.G."/>
            <person name="Errington H."/>
            <person name="Frankish A."/>
            <person name="Frankland J."/>
            <person name="French L."/>
            <person name="Garner P."/>
            <person name="Garnett J."/>
            <person name="Gay L."/>
            <person name="Ghori M.R.J."/>
            <person name="Gibson R."/>
            <person name="Gilby L.M."/>
            <person name="Gillett W."/>
            <person name="Glithero R.J."/>
            <person name="Grafham D.V."/>
            <person name="Griffiths C."/>
            <person name="Griffiths-Jones S."/>
            <person name="Grocock R."/>
            <person name="Hammond S."/>
            <person name="Harrison E.S.I."/>
            <person name="Hart E."/>
            <person name="Haugen E."/>
            <person name="Heath P.D."/>
            <person name="Holmes S."/>
            <person name="Holt K."/>
            <person name="Howden P.J."/>
            <person name="Hunt A.R."/>
            <person name="Hunt S.E."/>
            <person name="Hunter G."/>
            <person name="Isherwood J."/>
            <person name="James R."/>
            <person name="Johnson C."/>
            <person name="Johnson D."/>
            <person name="Joy A."/>
            <person name="Kay M."/>
            <person name="Kershaw J.K."/>
            <person name="Kibukawa M."/>
            <person name="Kimberley A.M."/>
            <person name="King A."/>
            <person name="Knights A.J."/>
            <person name="Lad H."/>
            <person name="Laird G."/>
            <person name="Lawlor S."/>
            <person name="Leongamornlert D.A."/>
            <person name="Lloyd D.M."/>
            <person name="Loveland J."/>
            <person name="Lovell J."/>
            <person name="Lush M.J."/>
            <person name="Lyne R."/>
            <person name="Martin S."/>
            <person name="Mashreghi-Mohammadi M."/>
            <person name="Matthews L."/>
            <person name="Matthews N.S.W."/>
            <person name="McLaren S."/>
            <person name="Milne S."/>
            <person name="Mistry S."/>
            <person name="Moore M.J.F."/>
            <person name="Nickerson T."/>
            <person name="O'Dell C.N."/>
            <person name="Oliver K."/>
            <person name="Palmeiri A."/>
            <person name="Palmer S.A."/>
            <person name="Parker A."/>
            <person name="Patel D."/>
            <person name="Pearce A.V."/>
            <person name="Peck A.I."/>
            <person name="Pelan S."/>
            <person name="Phelps K."/>
            <person name="Phillimore B.J."/>
            <person name="Plumb R."/>
            <person name="Rajan J."/>
            <person name="Raymond C."/>
            <person name="Rouse G."/>
            <person name="Saenphimmachak C."/>
            <person name="Sehra H.K."/>
            <person name="Sheridan E."/>
            <person name="Shownkeen R."/>
            <person name="Sims S."/>
            <person name="Skuce C.D."/>
            <person name="Smith M."/>
            <person name="Steward C."/>
            <person name="Subramanian S."/>
            <person name="Sycamore N."/>
            <person name="Tracey A."/>
            <person name="Tromans A."/>
            <person name="Van Helmond Z."/>
            <person name="Wall M."/>
            <person name="Wallis J.M."/>
            <person name="White S."/>
            <person name="Whitehead S.L."/>
            <person name="Wilkinson J.E."/>
            <person name="Willey D.L."/>
            <person name="Williams H."/>
            <person name="Wilming L."/>
            <person name="Wray P.W."/>
            <person name="Wu Z."/>
            <person name="Coulson A."/>
            <person name="Vaudin M."/>
            <person name="Sulston J.E."/>
            <person name="Durbin R.M."/>
            <person name="Hubbard T."/>
            <person name="Wooster R."/>
            <person name="Dunham I."/>
            <person name="Carter N.P."/>
            <person name="McVean G."/>
            <person name="Ross M.T."/>
            <person name="Harrow J."/>
            <person name="Olson M.V."/>
            <person name="Beck S."/>
            <person name="Rogers J."/>
            <person name="Bentley D.R."/>
        </authorList>
    </citation>
    <scope>NUCLEOTIDE SEQUENCE [LARGE SCALE GENOMIC DNA]</scope>
</reference>
<reference key="4">
    <citation type="submission" date="2005-09" db="EMBL/GenBank/DDBJ databases">
        <authorList>
            <person name="Mural R.J."/>
            <person name="Istrail S."/>
            <person name="Sutton G.G."/>
            <person name="Florea L."/>
            <person name="Halpern A.L."/>
            <person name="Mobarry C.M."/>
            <person name="Lippert R."/>
            <person name="Walenz B."/>
            <person name="Shatkay H."/>
            <person name="Dew I."/>
            <person name="Miller J.R."/>
            <person name="Flanigan M.J."/>
            <person name="Edwards N.J."/>
            <person name="Bolanos R."/>
            <person name="Fasulo D."/>
            <person name="Halldorsson B.V."/>
            <person name="Hannenhalli S."/>
            <person name="Turner R."/>
            <person name="Yooseph S."/>
            <person name="Lu F."/>
            <person name="Nusskern D.R."/>
            <person name="Shue B.C."/>
            <person name="Zheng X.H."/>
            <person name="Zhong F."/>
            <person name="Delcher A.L."/>
            <person name="Huson D.H."/>
            <person name="Kravitz S.A."/>
            <person name="Mouchard L."/>
            <person name="Reinert K."/>
            <person name="Remington K.A."/>
            <person name="Clark A.G."/>
            <person name="Waterman M.S."/>
            <person name="Eichler E.E."/>
            <person name="Adams M.D."/>
            <person name="Hunkapiller M.W."/>
            <person name="Myers E.W."/>
            <person name="Venter J.C."/>
        </authorList>
    </citation>
    <scope>NUCLEOTIDE SEQUENCE [LARGE SCALE GENOMIC DNA]</scope>
</reference>
<reference key="5">
    <citation type="journal article" date="2004" name="Genome Res.">
        <title>The status, quality, and expansion of the NIH full-length cDNA project: the Mammalian Gene Collection (MGC).</title>
        <authorList>
            <consortium name="The MGC Project Team"/>
        </authorList>
    </citation>
    <scope>NUCLEOTIDE SEQUENCE [LARGE SCALE MRNA] (ISOFORM 1)</scope>
    <source>
        <tissue>Colon</tissue>
    </source>
</reference>
<reference key="6">
    <citation type="journal article" date="1998" name="EMBO J.">
        <title>Mitogen- and stress-activated protein kinase-1 (MSK1) is directly activated by MAPK and SAPK2/p38, and may mediate activation of CREB.</title>
        <authorList>
            <person name="Deak M."/>
            <person name="Clifton A.D."/>
            <person name="Lucocq J.M."/>
            <person name="Alessi D.R."/>
        </authorList>
    </citation>
    <scope>SUBCELLULAR LOCATION</scope>
</reference>
<reference key="7">
    <citation type="journal article" date="1998" name="J. Biol. Chem.">
        <title>Identification of regulatory phosphorylation sites in mitogen-activated protein kinase (MAPK)-activated protein kinase-1a/p90rsk that are inducible by MAPK.</title>
        <authorList>
            <person name="Dalby K.N."/>
            <person name="Morrice N."/>
            <person name="Caudwell F.B."/>
            <person name="Avruch J."/>
            <person name="Cohen P."/>
        </authorList>
    </citation>
    <scope>FUNCTION</scope>
    <scope>ACTIVITY REGULATION</scope>
    <scope>PHOSPHORYLATION AT SER-221; THR-359; SER-363; SER-380; THR-573 AND SER-732</scope>
</reference>
<reference key="8">
    <citation type="journal article" date="2000" name="Curr. Biol.">
        <title>Rsk1 mediates a MEK-MAP kinase cell survival signal.</title>
        <authorList>
            <person name="Shimamura A."/>
            <person name="Ballif B.A."/>
            <person name="Richards S.A."/>
            <person name="Blenis J."/>
        </authorList>
    </citation>
    <scope>FUNCTION IN PHOSPHORYLATION OF BAD</scope>
</reference>
<reference key="9">
    <citation type="journal article" date="2001" name="Mol. Cell">
        <title>C/EBPbeta phosphorylation by RSK creates a functional XEXD caspase inhibitory box critical for cell survival.</title>
        <authorList>
            <person name="Buck M."/>
            <person name="Poli V."/>
            <person name="Hunter T."/>
            <person name="Chojkier M."/>
        </authorList>
    </citation>
    <scope>FUNCTION IN PHOSPHORYLATION OF CEBPB</scope>
</reference>
<reference key="10">
    <citation type="journal article" date="2002" name="J. Biol. Chem.">
        <title>Regulation of the ETS transcription factor ER81 by the 90-kDa ribosomal S6 kinase 1 and protein kinase A.</title>
        <authorList>
            <person name="Wu J."/>
            <person name="Janknecht R."/>
        </authorList>
    </citation>
    <scope>FUNCTION IN PHOSPHORYLATION OF ETV1/ER81</scope>
    <scope>INTERACTION WITH ETV1/ER81</scope>
</reference>
<reference key="11">
    <citation type="journal article" date="2003" name="Mol. Cell. Biol.">
        <title>Phosphorylation of p90 ribosomal S6 kinase (RSK) regulates extracellular signal-regulated kinase docking and RSK activity.</title>
        <authorList>
            <person name="Roux P.P."/>
            <person name="Richards S.A."/>
            <person name="Blenis J."/>
        </authorList>
    </citation>
    <scope>INTERACTION WITH MAPK1 OR MAPK3</scope>
</reference>
<reference key="12">
    <citation type="journal article" date="2004" name="J. Biol. Chem.">
        <title>90-kDa ribosomal S6 kinase is a direct target for the nuclear fibroblast growth factor receptor 1 (FGFR1): role in FGFR1 signaling.</title>
        <authorList>
            <person name="Hu Y."/>
            <person name="Fang X."/>
            <person name="Dunham S.M."/>
            <person name="Prada C."/>
            <person name="Stachowiak E.K."/>
            <person name="Stachowiak M.K."/>
        </authorList>
    </citation>
    <scope>FUNCTION</scope>
    <scope>INTERACTION WITH FGFR1</scope>
    <scope>ACTIVITY REGULATION</scope>
    <scope>SUBCELLULAR LOCATION</scope>
</reference>
<reference key="13">
    <citation type="journal article" date="2004" name="Proc. Natl. Acad. Sci. U.S.A.">
        <title>Tumor-promoting phorbol esters and activated Ras inactivate the tuberous sclerosis tumor suppressor complex via p90 ribosomal S6 kinase.</title>
        <authorList>
            <person name="Roux P.P."/>
            <person name="Ballif B.A."/>
            <person name="Anjum R."/>
            <person name="Gygi S.P."/>
            <person name="Blenis J."/>
        </authorList>
    </citation>
    <scope>FUNCTION IN MTOR SIGNALING</scope>
    <scope>INTERACTION WITH TSC2</scope>
</reference>
<reference key="14">
    <citation type="journal article" date="2005" name="Curr. Biol.">
        <title>The tumor suppressor DAP kinase is a target of RSK-mediated survival signaling.</title>
        <authorList>
            <person name="Anjum R."/>
            <person name="Roux P.P."/>
            <person name="Ballif B.A."/>
            <person name="Gygi S.P."/>
            <person name="Blenis J."/>
        </authorList>
    </citation>
    <scope>FUNCTION IN PHOSPHORYLATION OF DAPK1</scope>
</reference>
<reference key="15">
    <citation type="journal article" date="2006" name="Biochem. J.">
        <title>Nur77 is phosphorylated in cells by RSK in response to mitogenic stimulation.</title>
        <authorList>
            <person name="Wingate A.D."/>
            <person name="Campbell D.G."/>
            <person name="Peggie M."/>
            <person name="Arthur J.S."/>
        </authorList>
    </citation>
    <scope>FUNCTION IN PHOSPHORYLATION OF NR4A1/NUR77</scope>
</reference>
<reference key="16">
    <citation type="journal article" date="2006" name="EMBO J.">
        <title>The mTOR/PI3K and MAPK pathways converge on eIF4B to control its phosphorylation and activity.</title>
        <authorList>
            <person name="Shahbazian D."/>
            <person name="Roux P.P."/>
            <person name="Mieulet V."/>
            <person name="Cohen M.S."/>
            <person name="Raught B."/>
            <person name="Taunton J."/>
            <person name="Hershey J.W."/>
            <person name="Blenis J."/>
            <person name="Pende M."/>
            <person name="Sonenberg N."/>
        </authorList>
    </citation>
    <scope>FUNCTION IN TRANSLATION REGULATION</scope>
    <scope>FUNCTION IN PHOSPHORYLATION OF EIF4B</scope>
</reference>
<reference key="17">
    <citation type="journal article" date="2006" name="Nat. Biotechnol.">
        <title>A probability-based approach for high-throughput protein phosphorylation analysis and site localization.</title>
        <authorList>
            <person name="Beausoleil S.A."/>
            <person name="Villen J."/>
            <person name="Gerber S.A."/>
            <person name="Rush J."/>
            <person name="Gygi S.P."/>
        </authorList>
    </citation>
    <scope>IDENTIFICATION BY MASS SPECTROMETRY [LARGE SCALE ANALYSIS]</scope>
    <source>
        <tissue>Cervix carcinoma</tissue>
    </source>
</reference>
<reference key="18">
    <citation type="journal article" date="2007" name="J. Biol. Chem.">
        <title>RAS/ERK signaling promotes site-specific ribosomal protein S6 phosphorylation via RSK and stimulates cap-dependent translation.</title>
        <authorList>
            <person name="Roux P.P."/>
            <person name="Shahbazian D."/>
            <person name="Vu H."/>
            <person name="Holz M.K."/>
            <person name="Cohen M.S."/>
            <person name="Taunton J."/>
            <person name="Sonenberg N."/>
            <person name="Blenis J."/>
        </authorList>
    </citation>
    <scope>FUNCTION IN PHOSPHORYLATION OF RPS6</scope>
</reference>
<reference key="19">
    <citation type="journal article" date="2008" name="Curr. Biol.">
        <title>Oncogenic MAPK signaling stimulates mTORC1 activity by promoting RSK-mediated raptor phosphorylation.</title>
        <authorList>
            <person name="Carriere A."/>
            <person name="Cargnello M."/>
            <person name="Julien L.A."/>
            <person name="Gao H."/>
            <person name="Bonneil E."/>
            <person name="Thibault P."/>
            <person name="Roux P.P."/>
        </authorList>
    </citation>
    <scope>FUNCTION IN MTOR SIGNALING</scope>
</reference>
<reference key="20">
    <citation type="journal article" date="2008" name="Front. Biosci.">
        <title>The RSK factors of activating the Ras/MAPK signaling cascade.</title>
        <authorList>
            <person name="Carriere A."/>
            <person name="Ray H."/>
            <person name="Blenis J."/>
            <person name="Roux P.P."/>
        </authorList>
    </citation>
    <scope>REVIEW ON FUNCTION</scope>
    <scope>REVIEW ON ACTIVITY REGULATION</scope>
</reference>
<reference key="21">
    <citation type="journal article" date="2008" name="Mol. Cell">
        <title>Kinase-selective enrichment enables quantitative phosphoproteomics of the kinome across the cell cycle.</title>
        <authorList>
            <person name="Daub H."/>
            <person name="Olsen J.V."/>
            <person name="Bairlein M."/>
            <person name="Gnad F."/>
            <person name="Oppermann F.S."/>
            <person name="Korner R."/>
            <person name="Greff Z."/>
            <person name="Keri G."/>
            <person name="Stemmann O."/>
            <person name="Mann M."/>
        </authorList>
    </citation>
    <scope>PHOSPHORYLATION [LARGE SCALE ANALYSIS] AT THR-359; SER-363 AND SER-380</scope>
    <scope>IDENTIFICATION BY MASS SPECTROMETRY [LARGE SCALE ANALYSIS]</scope>
    <source>
        <tissue>Cervix carcinoma</tissue>
    </source>
</reference>
<reference key="22">
    <citation type="journal article" date="2008" name="Nat. Rev. Mol. Cell Biol.">
        <title>The RSK family of kinases: emerging roles in cellular signalling.</title>
        <authorList>
            <person name="Anjum R."/>
            <person name="Blenis J."/>
        </authorList>
    </citation>
    <scope>REVIEW ON FUNCTION</scope>
    <scope>REVIEW ON ACTIVITY REGULATION</scope>
</reference>
<reference key="23">
    <citation type="journal article" date="2008" name="Proc. Natl. Acad. Sci. U.S.A.">
        <title>A quantitative atlas of mitotic phosphorylation.</title>
        <authorList>
            <person name="Dephoure N."/>
            <person name="Zhou C."/>
            <person name="Villen J."/>
            <person name="Beausoleil S.A."/>
            <person name="Bakalarski C.E."/>
            <person name="Elledge S.J."/>
            <person name="Gygi S.P."/>
        </authorList>
    </citation>
    <scope>PHOSPHORYLATION [LARGE SCALE ANALYSIS] AT THR-359; SER-363; SER-369 AND SER-380</scope>
    <scope>IDENTIFICATION BY MASS SPECTROMETRY [LARGE SCALE ANALYSIS]</scope>
    <source>
        <tissue>Cervix carcinoma</tissue>
    </source>
</reference>
<reference key="24">
    <citation type="journal article" date="2009" name="Mol. Cell. Proteomics">
        <title>Large-scale proteomics analysis of the human kinome.</title>
        <authorList>
            <person name="Oppermann F.S."/>
            <person name="Gnad F."/>
            <person name="Olsen J.V."/>
            <person name="Hornberger R."/>
            <person name="Greff Z."/>
            <person name="Keri G."/>
            <person name="Mann M."/>
            <person name="Daub H."/>
        </authorList>
    </citation>
    <scope>PHOSPHORYLATION [LARGE SCALE ANALYSIS] AT SER-54; SER-307; THR-359; SER-363; SER-369 AND SER-380</scope>
    <scope>IDENTIFICATION BY MASS SPECTROMETRY [LARGE SCALE ANALYSIS]</scope>
</reference>
<reference key="25">
    <citation type="journal article" date="2010" name="Sci. Signal.">
        <title>Quantitative phosphoproteomics reveals widespread full phosphorylation site occupancy during mitosis.</title>
        <authorList>
            <person name="Olsen J.V."/>
            <person name="Vermeulen M."/>
            <person name="Santamaria A."/>
            <person name="Kumar C."/>
            <person name="Miller M.L."/>
            <person name="Jensen L.J."/>
            <person name="Gnad F."/>
            <person name="Cox J."/>
            <person name="Jensen T.S."/>
            <person name="Nigg E.A."/>
            <person name="Brunak S."/>
            <person name="Mann M."/>
        </authorList>
    </citation>
    <scope>PHOSPHORYLATION [LARGE SCALE ANALYSIS] AT SER-380</scope>
    <scope>IDENTIFICATION BY MASS SPECTROMETRY [LARGE SCALE ANALYSIS]</scope>
    <source>
        <tissue>Cervix carcinoma</tissue>
    </source>
</reference>
<reference key="26">
    <citation type="journal article" date="2011" name="BMC Syst. Biol.">
        <title>Initial characterization of the human central proteome.</title>
        <authorList>
            <person name="Burkard T.R."/>
            <person name="Planyavsky M."/>
            <person name="Kaupe I."/>
            <person name="Breitwieser F.P."/>
            <person name="Buerckstuemmer T."/>
            <person name="Bennett K.L."/>
            <person name="Superti-Furga G."/>
            <person name="Colinge J."/>
        </authorList>
    </citation>
    <scope>IDENTIFICATION BY MASS SPECTROMETRY [LARGE SCALE ANALYSIS]</scope>
</reference>
<reference key="27">
    <citation type="journal article" date="2011" name="Mol. Cell">
        <title>DEPTOR, an mTOR inhibitor, is a physiological substrate of SCF(betaTrCP) E3 ubiquitin ligase and regulates survival and autophagy.</title>
        <authorList>
            <person name="Zhao Y."/>
            <person name="Xiong X."/>
            <person name="Sun Y."/>
        </authorList>
    </citation>
    <scope>FUNCTION</scope>
</reference>
<reference key="28">
    <citation type="journal article" date="2011" name="Sci. Signal.">
        <title>System-wide temporal characterization of the proteome and phosphoproteome of human embryonic stem cell differentiation.</title>
        <authorList>
            <person name="Rigbolt K.T."/>
            <person name="Prokhorova T.A."/>
            <person name="Akimov V."/>
            <person name="Henningsen J."/>
            <person name="Johansen P.T."/>
            <person name="Kratchmarova I."/>
            <person name="Kassem M."/>
            <person name="Mann M."/>
            <person name="Olsen J.V."/>
            <person name="Blagoev B."/>
        </authorList>
    </citation>
    <scope>PHOSPHORYLATION [LARGE SCALE ANALYSIS] AT THR-359 AND SER-363</scope>
    <scope>IDENTIFICATION BY MASS SPECTROMETRY [LARGE SCALE ANALYSIS]</scope>
</reference>
<reference key="29">
    <citation type="journal article" date="2013" name="J. Proteome Res.">
        <title>Toward a comprehensive characterization of a human cancer cell phosphoproteome.</title>
        <authorList>
            <person name="Zhou H."/>
            <person name="Di Palma S."/>
            <person name="Preisinger C."/>
            <person name="Peng M."/>
            <person name="Polat A.N."/>
            <person name="Heck A.J."/>
            <person name="Mohammed S."/>
        </authorList>
    </citation>
    <scope>PHOSPHORYLATION [LARGE SCALE ANALYSIS] AT THR-359; SER-363; SER-369 AND SER-380</scope>
    <scope>IDENTIFICATION BY MASS SPECTROMETRY [LARGE SCALE ANALYSIS]</scope>
    <source>
        <tissue>Cervix carcinoma</tissue>
        <tissue>Erythroleukemia</tissue>
    </source>
</reference>
<reference key="30">
    <citation type="journal article" date="2014" name="J. Proteomics">
        <title>An enzyme assisted RP-RPLC approach for in-depth analysis of human liver phosphoproteome.</title>
        <authorList>
            <person name="Bian Y."/>
            <person name="Song C."/>
            <person name="Cheng K."/>
            <person name="Dong M."/>
            <person name="Wang F."/>
            <person name="Huang J."/>
            <person name="Sun D."/>
            <person name="Wang L."/>
            <person name="Ye M."/>
            <person name="Zou H."/>
        </authorList>
    </citation>
    <scope>PHOSPHORYLATION [LARGE SCALE ANALYSIS] AT SER-363 AND SER-380</scope>
    <scope>IDENTIFICATION BY MASS SPECTROMETRY [LARGE SCALE ANALYSIS]</scope>
    <source>
        <tissue>Liver</tissue>
    </source>
</reference>
<reference key="31">
    <citation type="journal article" date="2015" name="Nat. Commun.">
        <title>Crucial roles of RSK in cell motility by catalysing serine phosphorylation of EphA2.</title>
        <authorList>
            <person name="Zhou Y."/>
            <person name="Yamada N."/>
            <person name="Tanaka T."/>
            <person name="Hori T."/>
            <person name="Yokoyama S."/>
            <person name="Hayakawa Y."/>
            <person name="Yano S."/>
            <person name="Fukuoka J."/>
            <person name="Koizumi K."/>
            <person name="Saiki I."/>
            <person name="Sakurai H."/>
        </authorList>
    </citation>
    <scope>FUNCTION IN PHOSPHORYLATION OF EPHA2</scope>
</reference>
<reference key="32">
    <citation type="journal article" date="2019" name="J. Virol.">
        <title>Development of an ORF45-Derived Peptide To Inhibit the Sustained RSK Activation and Lytic Replication of Kaposi's Sarcoma-Associated Herpesvirus.</title>
        <authorList>
            <person name="Li X."/>
            <person name="Huang L."/>
            <person name="Xiao Y."/>
            <person name="Yao X."/>
            <person name="Long X."/>
            <person name="Zhu F."/>
            <person name="Kuang E."/>
        </authorList>
    </citation>
    <scope>INTERACTION WITH KAPOSI'S SARCOMA-ASSOCIATED HERPESVIRUS/HHV-8 PROTEIN ORF45 (MICROBIAL INFECTION)</scope>
    <scope>FUNCTION (MICROBIAL INFECTION)</scope>
</reference>
<reference key="33">
    <citation type="journal article" date="2022" name="Mol. Cell">
        <title>The mTORC1-SLC4A7 axis stimulates bicarbonate import to enhance de novo nucleotide synthesis.</title>
        <authorList>
            <person name="Ali E.S."/>
            <person name="Liponska A."/>
            <person name="O'Hara B.P."/>
            <person name="Amici D.R."/>
            <person name="Torno M.D."/>
            <person name="Gao P."/>
            <person name="Asara J.M."/>
            <person name="Yap M.F."/>
            <person name="Mendillo M.L."/>
            <person name="Ben-Sahra I."/>
        </authorList>
    </citation>
    <scope>FUNCTION</scope>
</reference>
<reference key="34">
    <citation type="journal article" date="2007" name="Protein Sci.">
        <title>Crystal structures of the N-terminal kinase domain of human RSK1 bound to three different ligands: Implications for the design of RSK1 specific inhibitors.</title>
        <authorList>
            <person name="Ikuta M."/>
            <person name="Kornienko M."/>
            <person name="Byrne N."/>
            <person name="Reid J.C."/>
            <person name="Mizuarai S."/>
            <person name="Kotani H."/>
            <person name="Munshi S.K."/>
        </authorList>
    </citation>
    <scope>X-RAY CRYSTALLOGRAPHY (2.00 ANGSTROMS) OF 33-353 IN COMPLEX WITH INHIBITOR</scope>
</reference>
<reference key="35">
    <citation type="journal article" date="2007" name="Nature">
        <title>Patterns of somatic mutation in human cancer genomes.</title>
        <authorList>
            <person name="Greenman C."/>
            <person name="Stephens P."/>
            <person name="Smith R."/>
            <person name="Dalgliesh G.L."/>
            <person name="Hunter C."/>
            <person name="Bignell G."/>
            <person name="Davies H."/>
            <person name="Teague J."/>
            <person name="Butler A."/>
            <person name="Stevens C."/>
            <person name="Edkins S."/>
            <person name="O'Meara S."/>
            <person name="Vastrik I."/>
            <person name="Schmidt E.E."/>
            <person name="Avis T."/>
            <person name="Barthorpe S."/>
            <person name="Bhamra G."/>
            <person name="Buck G."/>
            <person name="Choudhury B."/>
            <person name="Clements J."/>
            <person name="Cole J."/>
            <person name="Dicks E."/>
            <person name="Forbes S."/>
            <person name="Gray K."/>
            <person name="Halliday K."/>
            <person name="Harrison R."/>
            <person name="Hills K."/>
            <person name="Hinton J."/>
            <person name="Jenkinson A."/>
            <person name="Jones D."/>
            <person name="Menzies A."/>
            <person name="Mironenko T."/>
            <person name="Perry J."/>
            <person name="Raine K."/>
            <person name="Richardson D."/>
            <person name="Shepherd R."/>
            <person name="Small A."/>
            <person name="Tofts C."/>
            <person name="Varian J."/>
            <person name="Webb T."/>
            <person name="West S."/>
            <person name="Widaa S."/>
            <person name="Yates A."/>
            <person name="Cahill D.P."/>
            <person name="Louis D.N."/>
            <person name="Goldstraw P."/>
            <person name="Nicholson A.G."/>
            <person name="Brasseur F."/>
            <person name="Looijenga L."/>
            <person name="Weber B.L."/>
            <person name="Chiew Y.-E."/>
            <person name="DeFazio A."/>
            <person name="Greaves M.F."/>
            <person name="Green A.R."/>
            <person name="Campbell P."/>
            <person name="Birney E."/>
            <person name="Easton D.F."/>
            <person name="Chenevix-Trench G."/>
            <person name="Tan M.-H."/>
            <person name="Khoo S.K."/>
            <person name="Teh B.T."/>
            <person name="Yuen S.T."/>
            <person name="Leung S.Y."/>
            <person name="Wooster R."/>
            <person name="Futreal P.A."/>
            <person name="Stratton M.R."/>
        </authorList>
    </citation>
    <scope>VARIANT [LARGE SCALE ANALYSIS] THR-335</scope>
</reference>
<dbReference type="EC" id="2.7.11.1"/>
<dbReference type="EMBL" id="L07597">
    <property type="protein sequence ID" value="AAC82497.1"/>
    <property type="molecule type" value="mRNA"/>
</dbReference>
<dbReference type="EMBL" id="AK292722">
    <property type="protein sequence ID" value="BAF85411.1"/>
    <property type="molecule type" value="mRNA"/>
</dbReference>
<dbReference type="EMBL" id="AK299007">
    <property type="protein sequence ID" value="BAH12926.1"/>
    <property type="molecule type" value="mRNA"/>
</dbReference>
<dbReference type="EMBL" id="AK315730">
    <property type="protein sequence ID" value="BAG38085.1"/>
    <property type="molecule type" value="mRNA"/>
</dbReference>
<dbReference type="EMBL" id="AL109743">
    <property type="protein sequence ID" value="CAC36348.1"/>
    <property type="molecule type" value="Genomic_DNA"/>
</dbReference>
<dbReference type="EMBL" id="AL627313">
    <property type="status" value="NOT_ANNOTATED_CDS"/>
    <property type="molecule type" value="Genomic_DNA"/>
</dbReference>
<dbReference type="EMBL" id="CH471059">
    <property type="protein sequence ID" value="EAX07799.1"/>
    <property type="molecule type" value="Genomic_DNA"/>
</dbReference>
<dbReference type="EMBL" id="BC014966">
    <property type="protein sequence ID" value="AAH14966.1"/>
    <property type="molecule type" value="mRNA"/>
</dbReference>
<dbReference type="CCDS" id="CCDS284.1">
    <molecule id="Q15418-1"/>
</dbReference>
<dbReference type="CCDS" id="CCDS30649.1">
    <molecule id="Q15418-2"/>
</dbReference>
<dbReference type="CCDS" id="CCDS81286.1">
    <molecule id="Q15418-4"/>
</dbReference>
<dbReference type="PIR" id="I51901">
    <property type="entry name" value="I51901"/>
</dbReference>
<dbReference type="RefSeq" id="NP_001006666.1">
    <molecule id="Q15418-2"/>
    <property type="nucleotide sequence ID" value="NM_001006665.2"/>
</dbReference>
<dbReference type="RefSeq" id="NP_001317370.1">
    <molecule id="Q15418-4"/>
    <property type="nucleotide sequence ID" value="NM_001330441.2"/>
</dbReference>
<dbReference type="RefSeq" id="NP_002944.2">
    <molecule id="Q15418-1"/>
    <property type="nucleotide sequence ID" value="NM_002953.3"/>
</dbReference>
<dbReference type="RefSeq" id="XP_024304639.1">
    <molecule id="Q15418-3"/>
    <property type="nucleotide sequence ID" value="XM_024448871.2"/>
</dbReference>
<dbReference type="RefSeq" id="XP_054187514.1">
    <molecule id="Q15418-3"/>
    <property type="nucleotide sequence ID" value="XM_054331539.1"/>
</dbReference>
<dbReference type="RefSeq" id="XP_054194066.1">
    <molecule id="Q15418-3"/>
    <property type="nucleotide sequence ID" value="XM_054338091.1"/>
</dbReference>
<dbReference type="PDB" id="2WNT">
    <property type="method" value="X-ray"/>
    <property type="resolution" value="2.40 A"/>
    <property type="chains" value="A/B=413-719"/>
</dbReference>
<dbReference type="PDB" id="2Z7Q">
    <property type="method" value="X-ray"/>
    <property type="resolution" value="2.00 A"/>
    <property type="chains" value="A=33-353"/>
</dbReference>
<dbReference type="PDB" id="2Z7R">
    <property type="method" value="X-ray"/>
    <property type="resolution" value="2.00 A"/>
    <property type="chains" value="A=33-353"/>
</dbReference>
<dbReference type="PDB" id="2Z7S">
    <property type="method" value="X-ray"/>
    <property type="resolution" value="2.10 A"/>
    <property type="chains" value="A=33-353"/>
</dbReference>
<dbReference type="PDB" id="3RNY">
    <property type="method" value="X-ray"/>
    <property type="resolution" value="2.70 A"/>
    <property type="chains" value="A/B=411-735"/>
</dbReference>
<dbReference type="PDB" id="3TEI">
    <property type="method" value="X-ray"/>
    <property type="resolution" value="2.40 A"/>
    <property type="chains" value="B=712-735"/>
</dbReference>
<dbReference type="PDB" id="4H3P">
    <property type="method" value="X-ray"/>
    <property type="resolution" value="2.30 A"/>
    <property type="chains" value="B/E=712-735"/>
</dbReference>
<dbReference type="PDB" id="4NIF">
    <property type="method" value="X-ray"/>
    <property type="resolution" value="2.15 A"/>
    <property type="chains" value="A/D=411-735"/>
</dbReference>
<dbReference type="PDB" id="5CSF">
    <property type="method" value="X-ray"/>
    <property type="resolution" value="2.40 A"/>
    <property type="chains" value="C=683-735"/>
</dbReference>
<dbReference type="PDB" id="5CSI">
    <property type="method" value="X-ray"/>
    <property type="resolution" value="2.13 A"/>
    <property type="chains" value="C=689-735"/>
</dbReference>
<dbReference type="PDB" id="5CSJ">
    <property type="method" value="X-ray"/>
    <property type="resolution" value="2.70 A"/>
    <property type="chains" value="C=696-735"/>
</dbReference>
<dbReference type="PDB" id="5CSN">
    <property type="method" value="X-ray"/>
    <property type="resolution" value="2.95 A"/>
    <property type="chains" value="C=683-720"/>
</dbReference>
<dbReference type="PDB" id="5N7D">
    <property type="method" value="X-ray"/>
    <property type="resolution" value="2.30 A"/>
    <property type="chains" value="C=688-735"/>
</dbReference>
<dbReference type="PDB" id="5N7F">
    <property type="method" value="X-ray"/>
    <property type="resolution" value="2.30 A"/>
    <property type="chains" value="C=688-735"/>
</dbReference>
<dbReference type="PDB" id="5N7G">
    <property type="method" value="X-ray"/>
    <property type="resolution" value="2.95 A"/>
    <property type="chains" value="C=729-735"/>
</dbReference>
<dbReference type="PDB" id="5V61">
    <property type="method" value="X-ray"/>
    <property type="resolution" value="2.20 A"/>
    <property type="chains" value="I=713-729"/>
</dbReference>
<dbReference type="PDB" id="5V62">
    <property type="method" value="X-ray"/>
    <property type="resolution" value="1.90 A"/>
    <property type="chains" value="I=713-729"/>
</dbReference>
<dbReference type="PDB" id="6TWY">
    <property type="method" value="X-ray"/>
    <property type="resolution" value="2.30 A"/>
    <property type="chains" value="C=725-735"/>
</dbReference>
<dbReference type="PDB" id="7P74">
    <property type="method" value="X-ray"/>
    <property type="resolution" value="1.90 A"/>
    <property type="chains" value="B=725-735"/>
</dbReference>
<dbReference type="PDB" id="7PC8">
    <property type="method" value="X-ray"/>
    <property type="resolution" value="2.50 A"/>
    <property type="chains" value="C/D=726-735"/>
</dbReference>
<dbReference type="PDB" id="7QQL">
    <property type="method" value="X-ray"/>
    <property type="resolution" value="2.44 A"/>
    <property type="chains" value="D/E/F=725-735"/>
</dbReference>
<dbReference type="PDB" id="8WF4">
    <property type="method" value="X-ray"/>
    <property type="resolution" value="2.65 A"/>
    <property type="chains" value="A/B=411-735"/>
</dbReference>
<dbReference type="PDB" id="8XOV">
    <property type="method" value="X-ray"/>
    <property type="resolution" value="2.55 A"/>
    <property type="chains" value="A=33-353"/>
</dbReference>
<dbReference type="PDBsum" id="2WNT"/>
<dbReference type="PDBsum" id="2Z7Q"/>
<dbReference type="PDBsum" id="2Z7R"/>
<dbReference type="PDBsum" id="2Z7S"/>
<dbReference type="PDBsum" id="3RNY"/>
<dbReference type="PDBsum" id="3TEI"/>
<dbReference type="PDBsum" id="4H3P"/>
<dbReference type="PDBsum" id="4NIF"/>
<dbReference type="PDBsum" id="5CSF"/>
<dbReference type="PDBsum" id="5CSI"/>
<dbReference type="PDBsum" id="5CSJ"/>
<dbReference type="PDBsum" id="5CSN"/>
<dbReference type="PDBsum" id="5N7D"/>
<dbReference type="PDBsum" id="5N7F"/>
<dbReference type="PDBsum" id="5N7G"/>
<dbReference type="PDBsum" id="5V61"/>
<dbReference type="PDBsum" id="5V62"/>
<dbReference type="PDBsum" id="6TWY"/>
<dbReference type="PDBsum" id="7P74"/>
<dbReference type="PDBsum" id="7PC8"/>
<dbReference type="PDBsum" id="7QQL"/>
<dbReference type="PDBsum" id="8WF4"/>
<dbReference type="PDBsum" id="8XOV"/>
<dbReference type="SMR" id="Q15418"/>
<dbReference type="BioGRID" id="112109">
    <property type="interactions" value="220"/>
</dbReference>
<dbReference type="DIP" id="DIP-29987N"/>
<dbReference type="ELM" id="Q15418"/>
<dbReference type="FunCoup" id="Q15418">
    <property type="interactions" value="2682"/>
</dbReference>
<dbReference type="IntAct" id="Q15418">
    <property type="interactions" value="79"/>
</dbReference>
<dbReference type="MINT" id="Q15418"/>
<dbReference type="STRING" id="9606.ENSP00000435412"/>
<dbReference type="BindingDB" id="Q15418"/>
<dbReference type="ChEMBL" id="CHEMBL2553"/>
<dbReference type="DrugBank" id="DB12010">
    <property type="generic name" value="Fostamatinib"/>
</dbReference>
<dbReference type="DrugBank" id="DB04751">
    <property type="generic name" value="Purvalanol A"/>
</dbReference>
<dbReference type="DrugCentral" id="Q15418"/>
<dbReference type="GuidetoPHARMACOLOGY" id="1527"/>
<dbReference type="GlyCosmos" id="Q15418">
    <property type="glycosylation" value="1 site, 1 glycan"/>
</dbReference>
<dbReference type="GlyGen" id="Q15418">
    <property type="glycosylation" value="4 sites, 1 O-linked glycan (4 sites)"/>
</dbReference>
<dbReference type="iPTMnet" id="Q15418"/>
<dbReference type="PhosphoSitePlus" id="Q15418"/>
<dbReference type="BioMuta" id="RPS6KA1"/>
<dbReference type="DMDM" id="20178306"/>
<dbReference type="CPTAC" id="CPTAC-2994"/>
<dbReference type="CPTAC" id="CPTAC-2995"/>
<dbReference type="CPTAC" id="non-CPTAC-5446"/>
<dbReference type="CPTAC" id="non-CPTAC-5702"/>
<dbReference type="jPOST" id="Q15418"/>
<dbReference type="MassIVE" id="Q15418"/>
<dbReference type="PaxDb" id="9606-ENSP00000435412"/>
<dbReference type="PeptideAtlas" id="Q15418"/>
<dbReference type="ProteomicsDB" id="23324"/>
<dbReference type="ProteomicsDB" id="60583">
    <molecule id="Q15418-1"/>
</dbReference>
<dbReference type="ProteomicsDB" id="60584">
    <molecule id="Q15418-2"/>
</dbReference>
<dbReference type="ProteomicsDB" id="60585">
    <molecule id="Q15418-3"/>
</dbReference>
<dbReference type="Pumba" id="Q15418"/>
<dbReference type="Antibodypedia" id="2073">
    <property type="antibodies" value="1653 antibodies from 46 providers"/>
</dbReference>
<dbReference type="DNASU" id="6195"/>
<dbReference type="Ensembl" id="ENST00000374168.7">
    <molecule id="Q15418-1"/>
    <property type="protein sequence ID" value="ENSP00000363283.2"/>
    <property type="gene ID" value="ENSG00000117676.14"/>
</dbReference>
<dbReference type="Ensembl" id="ENST00000526792.5">
    <molecule id="Q15418-3"/>
    <property type="protein sequence ID" value="ENSP00000431651.1"/>
    <property type="gene ID" value="ENSG00000117676.14"/>
</dbReference>
<dbReference type="Ensembl" id="ENST00000530003.5">
    <molecule id="Q15418-4"/>
    <property type="protein sequence ID" value="ENSP00000432281.1"/>
    <property type="gene ID" value="ENSG00000117676.14"/>
</dbReference>
<dbReference type="Ensembl" id="ENST00000531382.5">
    <molecule id="Q15418-2"/>
    <property type="protein sequence ID" value="ENSP00000435412.1"/>
    <property type="gene ID" value="ENSG00000117676.14"/>
</dbReference>
<dbReference type="Ensembl" id="ENST00000628081.2">
    <molecule id="Q15418-4"/>
    <property type="protein sequence ID" value="ENSP00000487553.1"/>
    <property type="gene ID" value="ENSG00000281877.3"/>
</dbReference>
<dbReference type="Ensembl" id="ENST00000628256.2">
    <molecule id="Q15418-2"/>
    <property type="protein sequence ID" value="ENSP00000487349.1"/>
    <property type="gene ID" value="ENSG00000281877.3"/>
</dbReference>
<dbReference type="Ensembl" id="ENST00000629832.3">
    <molecule id="Q15418-1"/>
    <property type="protein sequence ID" value="ENSP00000486881.1"/>
    <property type="gene ID" value="ENSG00000281877.3"/>
</dbReference>
<dbReference type="Ensembl" id="ENST00000631108.2">
    <molecule id="Q15418-3"/>
    <property type="protein sequence ID" value="ENSP00000487166.1"/>
    <property type="gene ID" value="ENSG00000281877.3"/>
</dbReference>
<dbReference type="GeneID" id="6195"/>
<dbReference type="KEGG" id="hsa:6195"/>
<dbReference type="MANE-Select" id="ENST00000374168.7">
    <property type="protein sequence ID" value="ENSP00000363283.2"/>
    <property type="RefSeq nucleotide sequence ID" value="NM_002953.4"/>
    <property type="RefSeq protein sequence ID" value="NP_002944.2"/>
</dbReference>
<dbReference type="UCSC" id="uc001bmr.2">
    <molecule id="Q15418-1"/>
    <property type="organism name" value="human"/>
</dbReference>
<dbReference type="UCSC" id="uc057dso.1">
    <property type="organism name" value="human"/>
</dbReference>
<dbReference type="AGR" id="HGNC:10430"/>
<dbReference type="CTD" id="6195"/>
<dbReference type="DisGeNET" id="6195"/>
<dbReference type="GeneCards" id="RPS6KA1"/>
<dbReference type="HGNC" id="HGNC:10430">
    <property type="gene designation" value="RPS6KA1"/>
</dbReference>
<dbReference type="HPA" id="ENSG00000117676">
    <property type="expression patterns" value="Low tissue specificity"/>
</dbReference>
<dbReference type="MIM" id="601684">
    <property type="type" value="gene"/>
</dbReference>
<dbReference type="neXtProt" id="NX_Q15418"/>
<dbReference type="OpenTargets" id="ENSG00000117676"/>
<dbReference type="PharmGKB" id="PA34845"/>
<dbReference type="VEuPathDB" id="HostDB:ENSG00000117676"/>
<dbReference type="eggNOG" id="KOG0603">
    <property type="taxonomic scope" value="Eukaryota"/>
</dbReference>
<dbReference type="GeneTree" id="ENSGT00940000159314"/>
<dbReference type="HOGENOM" id="CLU_000288_58_0_1"/>
<dbReference type="InParanoid" id="Q15418"/>
<dbReference type="OMA" id="ILEHSWV"/>
<dbReference type="OrthoDB" id="63267at2759"/>
<dbReference type="PAN-GO" id="Q15418">
    <property type="GO annotations" value="5 GO annotations based on evolutionary models"/>
</dbReference>
<dbReference type="PhylomeDB" id="Q15418"/>
<dbReference type="TreeFam" id="TF313438"/>
<dbReference type="BRENDA" id="2.7.11.1">
    <property type="organism ID" value="2681"/>
</dbReference>
<dbReference type="PathwayCommons" id="Q15418"/>
<dbReference type="Reactome" id="R-HSA-198753">
    <property type="pathway name" value="ERK/MAPK targets"/>
</dbReference>
<dbReference type="Reactome" id="R-HSA-199920">
    <property type="pathway name" value="CREB phosphorylation"/>
</dbReference>
<dbReference type="Reactome" id="R-HSA-2559582">
    <property type="pathway name" value="Senescence-Associated Secretory Phenotype (SASP)"/>
</dbReference>
<dbReference type="Reactome" id="R-HSA-437239">
    <property type="pathway name" value="Recycling pathway of L1"/>
</dbReference>
<dbReference type="Reactome" id="R-HSA-442742">
    <property type="pathway name" value="CREB1 phosphorylation through NMDA receptor-mediated activation of RAS signaling"/>
</dbReference>
<dbReference type="Reactome" id="R-HSA-444257">
    <property type="pathway name" value="RSK activation"/>
</dbReference>
<dbReference type="Reactome" id="R-HSA-881907">
    <property type="pathway name" value="Gastrin-CREB signalling pathway via PKC and MAPK"/>
</dbReference>
<dbReference type="Reactome" id="R-HSA-9856649">
    <property type="pathway name" value="Transcriptional and post-translational regulation of MITF-M expression and activity"/>
</dbReference>
<dbReference type="SABIO-RK" id="Q15418"/>
<dbReference type="SignaLink" id="Q15418"/>
<dbReference type="SIGNOR" id="Q15418"/>
<dbReference type="BioGRID-ORCS" id="6195">
    <property type="hits" value="27 hits in 1191 CRISPR screens"/>
</dbReference>
<dbReference type="ChiTaRS" id="RPS6KA1">
    <property type="organism name" value="human"/>
</dbReference>
<dbReference type="EvolutionaryTrace" id="Q15418"/>
<dbReference type="GeneWiki" id="RPS6KA1"/>
<dbReference type="GenomeRNAi" id="6195"/>
<dbReference type="Pharos" id="Q15418">
    <property type="development level" value="Tchem"/>
</dbReference>
<dbReference type="PRO" id="PR:Q15418"/>
<dbReference type="Proteomes" id="UP000005640">
    <property type="component" value="Chromosome 1"/>
</dbReference>
<dbReference type="RNAct" id="Q15418">
    <property type="molecule type" value="protein"/>
</dbReference>
<dbReference type="Bgee" id="ENSG00000117676">
    <property type="expression patterns" value="Expressed in blood and 102 other cell types or tissues"/>
</dbReference>
<dbReference type="ExpressionAtlas" id="Q15418">
    <property type="expression patterns" value="baseline and differential"/>
</dbReference>
<dbReference type="GO" id="GO:0005737">
    <property type="term" value="C:cytoplasm"/>
    <property type="evidence" value="ECO:0000318"/>
    <property type="project" value="GO_Central"/>
</dbReference>
<dbReference type="GO" id="GO:0005829">
    <property type="term" value="C:cytosol"/>
    <property type="evidence" value="ECO:0000314"/>
    <property type="project" value="HPA"/>
</dbReference>
<dbReference type="GO" id="GO:0005654">
    <property type="term" value="C:nucleoplasm"/>
    <property type="evidence" value="ECO:0000314"/>
    <property type="project" value="HPA"/>
</dbReference>
<dbReference type="GO" id="GO:0045202">
    <property type="term" value="C:synapse"/>
    <property type="evidence" value="ECO:0007669"/>
    <property type="project" value="GOC"/>
</dbReference>
<dbReference type="GO" id="GO:0005524">
    <property type="term" value="F:ATP binding"/>
    <property type="evidence" value="ECO:0007669"/>
    <property type="project" value="UniProtKB-KW"/>
</dbReference>
<dbReference type="GO" id="GO:0000287">
    <property type="term" value="F:magnesium ion binding"/>
    <property type="evidence" value="ECO:0007669"/>
    <property type="project" value="InterPro"/>
</dbReference>
<dbReference type="GO" id="GO:0106310">
    <property type="term" value="F:protein serine kinase activity"/>
    <property type="evidence" value="ECO:0007669"/>
    <property type="project" value="RHEA"/>
</dbReference>
<dbReference type="GO" id="GO:0004674">
    <property type="term" value="F:protein serine/threonine kinase activity"/>
    <property type="evidence" value="ECO:0000314"/>
    <property type="project" value="UniProtKB"/>
</dbReference>
<dbReference type="GO" id="GO:0004712">
    <property type="term" value="F:protein serine/threonine/tyrosine kinase activity"/>
    <property type="evidence" value="ECO:0000314"/>
    <property type="project" value="MGI"/>
</dbReference>
<dbReference type="GO" id="GO:0004711">
    <property type="term" value="F:ribosomal protein S6 kinase activity"/>
    <property type="evidence" value="ECO:0000318"/>
    <property type="project" value="GO_Central"/>
</dbReference>
<dbReference type="GO" id="GO:0007268">
    <property type="term" value="P:chemical synaptic transmission"/>
    <property type="evidence" value="ECO:0000304"/>
    <property type="project" value="Reactome"/>
</dbReference>
<dbReference type="GO" id="GO:0072574">
    <property type="term" value="P:hepatocyte proliferation"/>
    <property type="evidence" value="ECO:0000250"/>
    <property type="project" value="UniProtKB"/>
</dbReference>
<dbReference type="GO" id="GO:0043066">
    <property type="term" value="P:negative regulation of apoptotic process"/>
    <property type="evidence" value="ECO:0000314"/>
    <property type="project" value="UniProtKB"/>
</dbReference>
<dbReference type="GO" id="GO:0032007">
    <property type="term" value="P:negative regulation of TOR signaling"/>
    <property type="evidence" value="ECO:0000315"/>
    <property type="project" value="UniProtKB"/>
</dbReference>
<dbReference type="GO" id="GO:0045597">
    <property type="term" value="P:positive regulation of cell differentiation"/>
    <property type="evidence" value="ECO:0000304"/>
    <property type="project" value="UniProtKB"/>
</dbReference>
<dbReference type="GO" id="GO:0030307">
    <property type="term" value="P:positive regulation of cell growth"/>
    <property type="evidence" value="ECO:0000304"/>
    <property type="project" value="UniProtKB"/>
</dbReference>
<dbReference type="GO" id="GO:0045893">
    <property type="term" value="P:positive regulation of DNA-templated transcription"/>
    <property type="evidence" value="ECO:0000318"/>
    <property type="project" value="GO_Central"/>
</dbReference>
<dbReference type="GO" id="GO:2000491">
    <property type="term" value="P:positive regulation of hepatic stellate cell activation"/>
    <property type="evidence" value="ECO:0000315"/>
    <property type="project" value="UniProtKB"/>
</dbReference>
<dbReference type="GO" id="GO:0045944">
    <property type="term" value="P:positive regulation of transcription by RNA polymerase II"/>
    <property type="evidence" value="ECO:0000315"/>
    <property type="project" value="BHF-UCL"/>
</dbReference>
<dbReference type="GO" id="GO:0006468">
    <property type="term" value="P:protein phosphorylation"/>
    <property type="evidence" value="ECO:0000315"/>
    <property type="project" value="UniProtKB"/>
</dbReference>
<dbReference type="GO" id="GO:0043555">
    <property type="term" value="P:regulation of translation in response to stress"/>
    <property type="evidence" value="ECO:0000304"/>
    <property type="project" value="UniProtKB"/>
</dbReference>
<dbReference type="GO" id="GO:0007165">
    <property type="term" value="P:signal transduction"/>
    <property type="evidence" value="ECO:0000304"/>
    <property type="project" value="ProtInc"/>
</dbReference>
<dbReference type="GO" id="GO:0038202">
    <property type="term" value="P:TORC1 signaling"/>
    <property type="evidence" value="ECO:0000318"/>
    <property type="project" value="GO_Central"/>
</dbReference>
<dbReference type="CDD" id="cd14175">
    <property type="entry name" value="STKc_RSK1_C"/>
    <property type="match status" value="1"/>
</dbReference>
<dbReference type="CDD" id="cd05582">
    <property type="entry name" value="STKc_RSK_N"/>
    <property type="match status" value="1"/>
</dbReference>
<dbReference type="DisProt" id="DP01508"/>
<dbReference type="FunFam" id="1.10.510.10:FF:000010">
    <property type="entry name" value="Ribosomal protein S6 kinase"/>
    <property type="match status" value="1"/>
</dbReference>
<dbReference type="FunFam" id="1.10.510.10:FF:000041">
    <property type="entry name" value="Ribosomal protein S6 kinase"/>
    <property type="match status" value="1"/>
</dbReference>
<dbReference type="FunFam" id="3.30.200.20:FF:000013">
    <property type="entry name" value="Ribosomal protein S6 kinase"/>
    <property type="match status" value="1"/>
</dbReference>
<dbReference type="FunFam" id="3.30.200.20:FF:000121">
    <property type="entry name" value="Ribosomal protein S6 kinase"/>
    <property type="match status" value="1"/>
</dbReference>
<dbReference type="Gene3D" id="3.30.200.20">
    <property type="entry name" value="Phosphorylase Kinase, domain 1"/>
    <property type="match status" value="2"/>
</dbReference>
<dbReference type="Gene3D" id="1.10.510.10">
    <property type="entry name" value="Transferase(Phosphotransferase) domain 1"/>
    <property type="match status" value="2"/>
</dbReference>
<dbReference type="IDEAL" id="IID00726"/>
<dbReference type="InterPro" id="IPR000961">
    <property type="entry name" value="AGC-kinase_C"/>
</dbReference>
<dbReference type="InterPro" id="IPR011009">
    <property type="entry name" value="Kinase-like_dom_sf"/>
</dbReference>
<dbReference type="InterPro" id="IPR017892">
    <property type="entry name" value="Pkinase_C"/>
</dbReference>
<dbReference type="InterPro" id="IPR000719">
    <property type="entry name" value="Prot_kinase_dom"/>
</dbReference>
<dbReference type="InterPro" id="IPR017441">
    <property type="entry name" value="Protein_kinase_ATP_BS"/>
</dbReference>
<dbReference type="InterPro" id="IPR016239">
    <property type="entry name" value="Ribosomal_S6_kinase_II"/>
</dbReference>
<dbReference type="InterPro" id="IPR041906">
    <property type="entry name" value="RSK_N"/>
</dbReference>
<dbReference type="InterPro" id="IPR008271">
    <property type="entry name" value="Ser/Thr_kinase_AS"/>
</dbReference>
<dbReference type="PANTHER" id="PTHR24351">
    <property type="entry name" value="RIBOSOMAL PROTEIN S6 KINASE"/>
    <property type="match status" value="1"/>
</dbReference>
<dbReference type="Pfam" id="PF00069">
    <property type="entry name" value="Pkinase"/>
    <property type="match status" value="2"/>
</dbReference>
<dbReference type="Pfam" id="PF00433">
    <property type="entry name" value="Pkinase_C"/>
    <property type="match status" value="1"/>
</dbReference>
<dbReference type="PIRSF" id="PIRSF000606">
    <property type="entry name" value="Ribsml_S6_kin_2"/>
    <property type="match status" value="1"/>
</dbReference>
<dbReference type="SMART" id="SM00133">
    <property type="entry name" value="S_TK_X"/>
    <property type="match status" value="1"/>
</dbReference>
<dbReference type="SMART" id="SM00220">
    <property type="entry name" value="S_TKc"/>
    <property type="match status" value="2"/>
</dbReference>
<dbReference type="SUPFAM" id="SSF56112">
    <property type="entry name" value="Protein kinase-like (PK-like)"/>
    <property type="match status" value="2"/>
</dbReference>
<dbReference type="PROSITE" id="PS51285">
    <property type="entry name" value="AGC_KINASE_CTER"/>
    <property type="match status" value="1"/>
</dbReference>
<dbReference type="PROSITE" id="PS00107">
    <property type="entry name" value="PROTEIN_KINASE_ATP"/>
    <property type="match status" value="2"/>
</dbReference>
<dbReference type="PROSITE" id="PS50011">
    <property type="entry name" value="PROTEIN_KINASE_DOM"/>
    <property type="match status" value="2"/>
</dbReference>
<dbReference type="PROSITE" id="PS00108">
    <property type="entry name" value="PROTEIN_KINASE_ST"/>
    <property type="match status" value="2"/>
</dbReference>
<organism>
    <name type="scientific">Homo sapiens</name>
    <name type="common">Human</name>
    <dbReference type="NCBI Taxonomy" id="9606"/>
    <lineage>
        <taxon>Eukaryota</taxon>
        <taxon>Metazoa</taxon>
        <taxon>Chordata</taxon>
        <taxon>Craniata</taxon>
        <taxon>Vertebrata</taxon>
        <taxon>Euteleostomi</taxon>
        <taxon>Mammalia</taxon>
        <taxon>Eutheria</taxon>
        <taxon>Euarchontoglires</taxon>
        <taxon>Primates</taxon>
        <taxon>Haplorrhini</taxon>
        <taxon>Catarrhini</taxon>
        <taxon>Hominidae</taxon>
        <taxon>Homo</taxon>
    </lineage>
</organism>
<evidence type="ECO:0000250" key="1"/>
<evidence type="ECO:0000255" key="2">
    <source>
        <dbReference type="PROSITE-ProRule" id="PRU00159"/>
    </source>
</evidence>
<evidence type="ECO:0000255" key="3">
    <source>
        <dbReference type="PROSITE-ProRule" id="PRU00618"/>
    </source>
</evidence>
<evidence type="ECO:0000269" key="4">
    <source>
    </source>
</evidence>
<evidence type="ECO:0000269" key="5">
    <source>
    </source>
</evidence>
<evidence type="ECO:0000269" key="6">
    <source>
    </source>
</evidence>
<evidence type="ECO:0000269" key="7">
    <source>
    </source>
</evidence>
<evidence type="ECO:0000269" key="8">
    <source>
    </source>
</evidence>
<evidence type="ECO:0000269" key="9">
    <source>
    </source>
</evidence>
<evidence type="ECO:0000269" key="10">
    <source>
    </source>
</evidence>
<evidence type="ECO:0000269" key="11">
    <source>
    </source>
</evidence>
<evidence type="ECO:0000269" key="12">
    <source>
    </source>
</evidence>
<evidence type="ECO:0000269" key="13">
    <source>
    </source>
</evidence>
<evidence type="ECO:0000269" key="14">
    <source>
    </source>
</evidence>
<evidence type="ECO:0000269" key="15">
    <source>
    </source>
</evidence>
<evidence type="ECO:0000269" key="16">
    <source>
    </source>
</evidence>
<evidence type="ECO:0000269" key="17">
    <source>
    </source>
</evidence>
<evidence type="ECO:0000269" key="18">
    <source>
    </source>
</evidence>
<evidence type="ECO:0000269" key="19">
    <source>
    </source>
</evidence>
<evidence type="ECO:0000269" key="20">
    <source>
    </source>
</evidence>
<evidence type="ECO:0000269" key="21">
    <source>
    </source>
</evidence>
<evidence type="ECO:0000269" key="22">
    <source>
    </source>
</evidence>
<evidence type="ECO:0000303" key="23">
    <source>
    </source>
</evidence>
<evidence type="ECO:0000303" key="24">
    <source>
    </source>
</evidence>
<evidence type="ECO:0000303" key="25">
    <source>
    </source>
</evidence>
<evidence type="ECO:0000305" key="26"/>
<evidence type="ECO:0000305" key="27">
    <source>
    </source>
</evidence>
<evidence type="ECO:0007744" key="28">
    <source>
    </source>
</evidence>
<evidence type="ECO:0007744" key="29">
    <source>
    </source>
</evidence>
<evidence type="ECO:0007744" key="30">
    <source>
    </source>
</evidence>
<evidence type="ECO:0007744" key="31">
    <source>
    </source>
</evidence>
<evidence type="ECO:0007744" key="32">
    <source>
    </source>
</evidence>
<evidence type="ECO:0007744" key="33">
    <source>
    </source>
</evidence>
<evidence type="ECO:0007744" key="34">
    <source>
    </source>
</evidence>
<evidence type="ECO:0007829" key="35">
    <source>
        <dbReference type="PDB" id="2WNT"/>
    </source>
</evidence>
<evidence type="ECO:0007829" key="36">
    <source>
        <dbReference type="PDB" id="2Z7Q"/>
    </source>
</evidence>
<evidence type="ECO:0007829" key="37">
    <source>
        <dbReference type="PDB" id="4NIF"/>
    </source>
</evidence>
<evidence type="ECO:0007829" key="38">
    <source>
        <dbReference type="PDB" id="5V62"/>
    </source>
</evidence>
<evidence type="ECO:0007829" key="39">
    <source>
        <dbReference type="PDB" id="7P74"/>
    </source>
</evidence>
<evidence type="ECO:0007829" key="40">
    <source>
        <dbReference type="PDB" id="8WF4"/>
    </source>
</evidence>
<evidence type="ECO:0007829" key="41">
    <source>
        <dbReference type="PDB" id="8XOV"/>
    </source>
</evidence>
<protein>
    <recommendedName>
        <fullName>Ribosomal protein S6 kinase alpha-1</fullName>
        <shortName>S6K-alpha-1</shortName>
        <ecNumber>2.7.11.1</ecNumber>
    </recommendedName>
    <alternativeName>
        <fullName>90 kDa ribosomal protein S6 kinase 1</fullName>
        <shortName>p90-RSK 1</shortName>
        <shortName>p90RSK1</shortName>
        <shortName>p90S6K</shortName>
    </alternativeName>
    <alternativeName>
        <fullName>MAP kinase-activated protein kinase 1a</fullName>
        <shortName>MAPK-activated protein kinase 1a</shortName>
        <shortName>MAPKAP kinase 1a</shortName>
        <shortName>MAPKAPK-1a</shortName>
    </alternativeName>
    <alternativeName>
        <fullName>Ribosomal S6 kinase 1</fullName>
        <shortName>RSK-1</shortName>
    </alternativeName>
</protein>
<proteinExistence type="evidence at protein level"/>